<keyword id="KW-0274">FAD</keyword>
<keyword id="KW-0285">Flavoprotein</keyword>
<keyword id="KW-0413">Isomerase</keyword>
<keyword id="KW-0448">Lipopolysaccharide biosynthesis</keyword>
<keyword id="KW-0732">Signal</keyword>
<feature type="signal peptide" evidence="2">
    <location>
        <begin position="1"/>
        <end position="19"/>
    </location>
</feature>
<feature type="chain" id="PRO_0000087507" description="Probable UDP-galactopyranose mutase">
    <location>
        <begin position="20"/>
        <end position="384"/>
    </location>
</feature>
<feature type="binding site" evidence="1">
    <location>
        <position position="14"/>
    </location>
    <ligand>
        <name>FAD</name>
        <dbReference type="ChEBI" id="CHEBI:57692"/>
    </ligand>
</feature>
<feature type="binding site" evidence="1">
    <location>
        <begin position="33"/>
        <end position="34"/>
    </location>
    <ligand>
        <name>FAD</name>
        <dbReference type="ChEBI" id="CHEBI:57692"/>
    </ligand>
</feature>
<feature type="binding site" evidence="1">
    <location>
        <position position="41"/>
    </location>
    <ligand>
        <name>FAD</name>
        <dbReference type="ChEBI" id="CHEBI:57692"/>
    </ligand>
</feature>
<feature type="binding site" evidence="1">
    <location>
        <begin position="60"/>
        <end position="61"/>
    </location>
    <ligand>
        <name>FAD</name>
        <dbReference type="ChEBI" id="CHEBI:57692"/>
    </ligand>
</feature>
<feature type="binding site" evidence="1">
    <location>
        <position position="84"/>
    </location>
    <ligand>
        <name>UDP-alpha-D-galactose</name>
        <dbReference type="ChEBI" id="CHEBI:66914"/>
    </ligand>
</feature>
<feature type="binding site" evidence="1">
    <location>
        <position position="151"/>
    </location>
    <ligand>
        <name>UDP-alpha-D-galactose</name>
        <dbReference type="ChEBI" id="CHEBI:66914"/>
    </ligand>
</feature>
<feature type="binding site" evidence="1">
    <location>
        <position position="156"/>
    </location>
    <ligand>
        <name>UDP-alpha-D-galactose</name>
        <dbReference type="ChEBI" id="CHEBI:66914"/>
    </ligand>
</feature>
<feature type="binding site" evidence="1">
    <location>
        <position position="160"/>
    </location>
    <ligand>
        <name>UDP-alpha-D-galactose</name>
        <dbReference type="ChEBI" id="CHEBI:66914"/>
    </ligand>
</feature>
<feature type="binding site" evidence="1">
    <location>
        <position position="185"/>
    </location>
    <ligand>
        <name>UDP-alpha-D-galactose</name>
        <dbReference type="ChEBI" id="CHEBI:66914"/>
    </ligand>
</feature>
<feature type="binding site" evidence="1">
    <location>
        <position position="219"/>
    </location>
    <ligand>
        <name>FAD</name>
        <dbReference type="ChEBI" id="CHEBI:57692"/>
    </ligand>
</feature>
<feature type="binding site" evidence="1">
    <location>
        <position position="270"/>
    </location>
    <ligand>
        <name>UDP-alpha-D-galactose</name>
        <dbReference type="ChEBI" id="CHEBI:66914"/>
    </ligand>
</feature>
<feature type="binding site" evidence="1">
    <location>
        <position position="280"/>
    </location>
    <ligand>
        <name>UDP-alpha-D-galactose</name>
        <dbReference type="ChEBI" id="CHEBI:66914"/>
    </ligand>
</feature>
<feature type="binding site" evidence="1">
    <location>
        <position position="314"/>
    </location>
    <ligand>
        <name>UDP-alpha-D-galactose</name>
        <dbReference type="ChEBI" id="CHEBI:66914"/>
    </ligand>
</feature>
<feature type="binding site" evidence="1">
    <location>
        <position position="343"/>
    </location>
    <ligand>
        <name>FAD</name>
        <dbReference type="ChEBI" id="CHEBI:57692"/>
    </ligand>
</feature>
<feature type="binding site" evidence="1">
    <location>
        <position position="349"/>
    </location>
    <ligand>
        <name>UDP-alpha-D-galactose</name>
        <dbReference type="ChEBI" id="CHEBI:66914"/>
    </ligand>
</feature>
<feature type="binding site" evidence="1">
    <location>
        <begin position="350"/>
        <end position="355"/>
    </location>
    <ligand>
        <name>FAD</name>
        <dbReference type="ChEBI" id="CHEBI:57692"/>
    </ligand>
</feature>
<name>GLF8_KLEPN</name>
<protein>
    <recommendedName>
        <fullName>Probable UDP-galactopyranose mutase</fullName>
        <shortName>UGM</shortName>
        <ecNumber>5.4.99.9</ecNumber>
    </recommendedName>
    <alternativeName>
        <fullName>UDP-GALP mutase</fullName>
    </alternativeName>
    <alternativeName>
        <fullName>Uridine 5-diphosphate galactopyranose mutase</fullName>
    </alternativeName>
</protein>
<dbReference type="EC" id="5.4.99.9"/>
<dbReference type="EMBL" id="L41518">
    <property type="protein sequence ID" value="AAC98408.1"/>
    <property type="molecule type" value="Genomic_DNA"/>
</dbReference>
<dbReference type="SMR" id="Q48481"/>
<dbReference type="BindingDB" id="Q48481"/>
<dbReference type="UniPathway" id="UPA00281"/>
<dbReference type="GO" id="GO:0005829">
    <property type="term" value="C:cytosol"/>
    <property type="evidence" value="ECO:0007669"/>
    <property type="project" value="TreeGrafter"/>
</dbReference>
<dbReference type="GO" id="GO:0050660">
    <property type="term" value="F:flavin adenine dinucleotide binding"/>
    <property type="evidence" value="ECO:0007669"/>
    <property type="project" value="TreeGrafter"/>
</dbReference>
<dbReference type="GO" id="GO:0008767">
    <property type="term" value="F:UDP-galactopyranose mutase activity"/>
    <property type="evidence" value="ECO:0007669"/>
    <property type="project" value="UniProtKB-EC"/>
</dbReference>
<dbReference type="GO" id="GO:0009243">
    <property type="term" value="P:O antigen biosynthetic process"/>
    <property type="evidence" value="ECO:0007669"/>
    <property type="project" value="UniProtKB-UniPathway"/>
</dbReference>
<dbReference type="Gene3D" id="3.40.50.720">
    <property type="entry name" value="NAD(P)-binding Rossmann-like Domain"/>
    <property type="match status" value="3"/>
</dbReference>
<dbReference type="InterPro" id="IPR004379">
    <property type="entry name" value="UDP-GALP_mutase"/>
</dbReference>
<dbReference type="InterPro" id="IPR015899">
    <property type="entry name" value="UDP-GalPyranose_mutase_C"/>
</dbReference>
<dbReference type="NCBIfam" id="TIGR00031">
    <property type="entry name" value="UDP-GALP_mutase"/>
    <property type="match status" value="1"/>
</dbReference>
<dbReference type="PANTHER" id="PTHR21197">
    <property type="entry name" value="UDP-GALACTOPYRANOSE MUTASE"/>
    <property type="match status" value="1"/>
</dbReference>
<dbReference type="PANTHER" id="PTHR21197:SF0">
    <property type="entry name" value="UDP-GALACTOPYRANOSE MUTASE"/>
    <property type="match status" value="1"/>
</dbReference>
<dbReference type="Pfam" id="PF03275">
    <property type="entry name" value="GLF"/>
    <property type="match status" value="1"/>
</dbReference>
<dbReference type="Pfam" id="PF13450">
    <property type="entry name" value="NAD_binding_8"/>
    <property type="match status" value="1"/>
</dbReference>
<dbReference type="SUPFAM" id="SSF54373">
    <property type="entry name" value="FAD-linked reductases, C-terminal domain"/>
    <property type="match status" value="1"/>
</dbReference>
<dbReference type="SUPFAM" id="SSF51971">
    <property type="entry name" value="Nucleotide-binding domain"/>
    <property type="match status" value="1"/>
</dbReference>
<reference key="1">
    <citation type="journal article" date="1996" name="J. Bacteriol.">
        <title>Clonally diverse rfb gene clusters are involved in expression of a family of related D-galactan O antigens in Klebsiella species.</title>
        <authorList>
            <person name="Kelly R.F."/>
            <person name="Whitfield C."/>
        </authorList>
    </citation>
    <scope>NUCLEOTIDE SEQUENCE [GENOMIC DNA]</scope>
    <source>
        <strain>Serotype O8</strain>
    </source>
</reference>
<organism>
    <name type="scientific">Klebsiella pneumoniae</name>
    <dbReference type="NCBI Taxonomy" id="573"/>
    <lineage>
        <taxon>Bacteria</taxon>
        <taxon>Pseudomonadati</taxon>
        <taxon>Pseudomonadota</taxon>
        <taxon>Gammaproteobacteria</taxon>
        <taxon>Enterobacterales</taxon>
        <taxon>Enterobacteriaceae</taxon>
        <taxon>Klebsiella/Raoultella group</taxon>
        <taxon>Klebsiella</taxon>
        <taxon>Klebsiella pneumoniae complex</taxon>
    </lineage>
</organism>
<evidence type="ECO:0000250" key="1"/>
<evidence type="ECO:0000255" key="2"/>
<evidence type="ECO:0000305" key="3"/>
<comment type="function">
    <text evidence="1">Catalyzes the interconversion through a 2-keto intermediate of uridine diphosphogalactopyranose (UDP-GalP) into uridine diphosphogalactofuranose (UDP-GalF).</text>
</comment>
<comment type="catalytic activity">
    <reaction>
        <text>UDP-alpha-D-galactose = UDP-alpha-D-galactofuranose</text>
        <dbReference type="Rhea" id="RHEA:24132"/>
        <dbReference type="ChEBI" id="CHEBI:66914"/>
        <dbReference type="ChEBI" id="CHEBI:66915"/>
        <dbReference type="EC" id="5.4.99.9"/>
    </reaction>
</comment>
<comment type="cofactor">
    <cofactor evidence="1">
        <name>FAD</name>
        <dbReference type="ChEBI" id="CHEBI:57692"/>
    </cofactor>
    <text evidence="1">Binds 1 FAD per subunit.</text>
</comment>
<comment type="pathway">
    <text>Bacterial outer membrane biogenesis; LPS O-antigen biosynthesis.</text>
</comment>
<comment type="subunit">
    <text evidence="1">Homodimer.</text>
</comment>
<comment type="similarity">
    <text evidence="3">Belongs to the UDP-galactopyranose/dTDP-fucopyranose mutase family.</text>
</comment>
<accession>Q48481</accession>
<gene>
    <name type="primary">rfbD</name>
</gene>
<sequence>MNNKNIMIVGAGFSGVVIARQLAEQGYTVKIIDRRDHIGGNSYDTRDPQTDVMVHVYGPHIFHTDNETVWNYVNQYAEMMPYVNRVKATVNGQVFSLPINLHTINQFFAKTCSPDEARALISEKGDSSIVEPQTFEEQALRFIGKELYEAFFKGYTIKQWGMEPSELPASILKRLPVRFNYDDNYFNHKFQGMPKLGYTRMIEAIADHENISIELQREFLPEEREDYAHVFYSGPLDAFYSYQYGRLGYRTLDFEKFTYQGDYQGCAVMNYCSIDVPYTRITEHKYFSPWESHEGSVCYKEYSRACGENDIPYYPIRQMGEMALLEKYLSLAESEKNITFVGRLGTYRYLDMDVTIAEALKTADEFLSSVANQEEMPVFTVPVR</sequence>
<proteinExistence type="inferred from homology"/>